<protein>
    <recommendedName>
        <fullName evidence="1">GTP cyclohydrolase III</fullName>
        <ecNumber evidence="1">3.5.4.29</ecNumber>
    </recommendedName>
</protein>
<sequence>MIQITVVQIDNYGPWTVTPNPRRESDLQALQSRLYCDMNLQFGAHKGLAFYTRFDNIIAITNGIDLETHKRIQNSVKNRYPFTVSMAVASAETAYEAQKLATKTIQEYGSAQDDVRKEVLDVANEFVSNGYVQLAHVDINDITGKLTDLETAYDTYLSVQKTKLKLMEELKKYDSLGFFIGGDNFMCPCNGMNEKDFLCMFEDIKDSCGIELKAGIGIGKTAEDASNLADIGLEVIREGKTDSQVYTLKQEIDEQKNVPYNYMCPI</sequence>
<accession>Q6M066</accession>
<name>GCH3_METMP</name>
<comment type="function">
    <text evidence="1">Catalyzes the formation of 2-amino-5-formylamino-6-ribofuranosylamino-4(3H)-pyrimidinone ribonucleotide monophosphate and inorganic phosphate from GTP. Also has an independent pyrophosphate phosphohydrolase activity.</text>
</comment>
<comment type="catalytic activity">
    <reaction evidence="1">
        <text>GTP + 3 H2O = 2-amino-5-formylamino-6-(5-phospho-D-ribosylamino)pyrimidin-4(3H)-one + 2 phosphate + 2 H(+)</text>
        <dbReference type="Rhea" id="RHEA:22468"/>
        <dbReference type="ChEBI" id="CHEBI:15377"/>
        <dbReference type="ChEBI" id="CHEBI:15378"/>
        <dbReference type="ChEBI" id="CHEBI:37565"/>
        <dbReference type="ChEBI" id="CHEBI:43474"/>
        <dbReference type="ChEBI" id="CHEBI:57258"/>
        <dbReference type="EC" id="3.5.4.29"/>
    </reaction>
</comment>
<comment type="similarity">
    <text evidence="1">Belongs to the archaeal-type GTP cyclohydrolase family.</text>
</comment>
<evidence type="ECO:0000255" key="1">
    <source>
        <dbReference type="HAMAP-Rule" id="MF_00608"/>
    </source>
</evidence>
<organism>
    <name type="scientific">Methanococcus maripaludis (strain DSM 14266 / JCM 13030 / NBRC 101832 / S2 / LL)</name>
    <dbReference type="NCBI Taxonomy" id="267377"/>
    <lineage>
        <taxon>Archaea</taxon>
        <taxon>Methanobacteriati</taxon>
        <taxon>Methanobacteriota</taxon>
        <taxon>Methanomada group</taxon>
        <taxon>Methanococci</taxon>
        <taxon>Methanococcales</taxon>
        <taxon>Methanococcaceae</taxon>
        <taxon>Methanococcus</taxon>
    </lineage>
</organism>
<dbReference type="EC" id="3.5.4.29" evidence="1"/>
<dbReference type="EMBL" id="BX950229">
    <property type="protein sequence ID" value="CAF29961.1"/>
    <property type="molecule type" value="Genomic_DNA"/>
</dbReference>
<dbReference type="RefSeq" id="WP_011170349.1">
    <property type="nucleotide sequence ID" value="NC_005791.1"/>
</dbReference>
<dbReference type="SMR" id="Q6M066"/>
<dbReference type="STRING" id="267377.MMP0405"/>
<dbReference type="EnsemblBacteria" id="CAF29961">
    <property type="protein sequence ID" value="CAF29961"/>
    <property type="gene ID" value="MMP0405"/>
</dbReference>
<dbReference type="KEGG" id="mmp:MMP0405"/>
<dbReference type="PATRIC" id="fig|267377.15.peg.409"/>
<dbReference type="eggNOG" id="arCOG04202">
    <property type="taxonomic scope" value="Archaea"/>
</dbReference>
<dbReference type="HOGENOM" id="CLU_080076_0_0_2"/>
<dbReference type="OrthoDB" id="25211at2157"/>
<dbReference type="Proteomes" id="UP000000590">
    <property type="component" value="Chromosome"/>
</dbReference>
<dbReference type="GO" id="GO:0005525">
    <property type="term" value="F:GTP binding"/>
    <property type="evidence" value="ECO:0007669"/>
    <property type="project" value="UniProtKB-KW"/>
</dbReference>
<dbReference type="GO" id="GO:0043740">
    <property type="term" value="F:GTP cyclohydrolase IIa activity"/>
    <property type="evidence" value="ECO:0007669"/>
    <property type="project" value="UniProtKB-EC"/>
</dbReference>
<dbReference type="GO" id="GO:0009058">
    <property type="term" value="P:biosynthetic process"/>
    <property type="evidence" value="ECO:0007669"/>
    <property type="project" value="InterPro"/>
</dbReference>
<dbReference type="Gene3D" id="3.30.70.270">
    <property type="match status" value="1"/>
</dbReference>
<dbReference type="Gene3D" id="3.30.70.1230">
    <property type="entry name" value="Nucleotide cyclase"/>
    <property type="match status" value="1"/>
</dbReference>
<dbReference type="HAMAP" id="MF_00608">
    <property type="entry name" value="GTP_cyclohydro_3"/>
    <property type="match status" value="1"/>
</dbReference>
<dbReference type="InterPro" id="IPR007839">
    <property type="entry name" value="GTP_CycHdrlase_3"/>
</dbReference>
<dbReference type="InterPro" id="IPR029787">
    <property type="entry name" value="Nucleotide_cyclase"/>
</dbReference>
<dbReference type="InterPro" id="IPR043128">
    <property type="entry name" value="Rev_trsase/Diguanyl_cyclase"/>
</dbReference>
<dbReference type="NCBIfam" id="NF002587">
    <property type="entry name" value="PRK02240.1"/>
    <property type="match status" value="1"/>
</dbReference>
<dbReference type="PANTHER" id="PTHR42202">
    <property type="entry name" value="GTP CYCLOHYDROLASE III"/>
    <property type="match status" value="1"/>
</dbReference>
<dbReference type="PANTHER" id="PTHR42202:SF1">
    <property type="entry name" value="GTP CYCLOHYDROLASE III"/>
    <property type="match status" value="1"/>
</dbReference>
<dbReference type="Pfam" id="PF05165">
    <property type="entry name" value="GCH_III"/>
    <property type="match status" value="1"/>
</dbReference>
<dbReference type="PIRSF" id="PIRSF009265">
    <property type="entry name" value="GTP_cyclohydro_3"/>
    <property type="match status" value="1"/>
</dbReference>
<gene>
    <name evidence="1" type="primary">gch3</name>
    <name type="ordered locus">MMP0405</name>
</gene>
<feature type="chain" id="PRO_0000145755" description="GTP cyclohydrolase III">
    <location>
        <begin position="1"/>
        <end position="266"/>
    </location>
</feature>
<reference key="1">
    <citation type="journal article" date="2004" name="J. Bacteriol.">
        <title>Complete genome sequence of the genetically tractable hydrogenotrophic methanogen Methanococcus maripaludis.</title>
        <authorList>
            <person name="Hendrickson E.L."/>
            <person name="Kaul R."/>
            <person name="Zhou Y."/>
            <person name="Bovee D."/>
            <person name="Chapman P."/>
            <person name="Chung J."/>
            <person name="Conway de Macario E."/>
            <person name="Dodsworth J.A."/>
            <person name="Gillett W."/>
            <person name="Graham D.E."/>
            <person name="Hackett M."/>
            <person name="Haydock A.K."/>
            <person name="Kang A."/>
            <person name="Land M.L."/>
            <person name="Levy R."/>
            <person name="Lie T.J."/>
            <person name="Major T.A."/>
            <person name="Moore B.C."/>
            <person name="Porat I."/>
            <person name="Palmeiri A."/>
            <person name="Rouse G."/>
            <person name="Saenphimmachak C."/>
            <person name="Soell D."/>
            <person name="Van Dien S."/>
            <person name="Wang T."/>
            <person name="Whitman W.B."/>
            <person name="Xia Q."/>
            <person name="Zhang Y."/>
            <person name="Larimer F.W."/>
            <person name="Olson M.V."/>
            <person name="Leigh J.A."/>
        </authorList>
    </citation>
    <scope>NUCLEOTIDE SEQUENCE [LARGE SCALE GENOMIC DNA]</scope>
    <source>
        <strain>DSM 14266 / JCM 13030 / NBRC 101832 / S2 / LL</strain>
    </source>
</reference>
<keyword id="KW-0342">GTP-binding</keyword>
<keyword id="KW-0378">Hydrolase</keyword>
<keyword id="KW-0547">Nucleotide-binding</keyword>
<keyword id="KW-1185">Reference proteome</keyword>
<proteinExistence type="inferred from homology"/>